<sequence>MYIEMIDETGQVSQEIMEQTLDLLNFAAQKTGKEEKEMSVTFVTNERSHELNLEYRDTDRPTDVISLEYKPETPILFSQEDLAADPSLAEMMAEFDAYIGELFISIDKAREQSQEYGHSFEREMGFLAVHGFLHINGYDHYTLEEEKEMFTLQEEILTAYGLTRQ</sequence>
<keyword id="KW-0963">Cytoplasm</keyword>
<keyword id="KW-0255">Endonuclease</keyword>
<keyword id="KW-0378">Hydrolase</keyword>
<keyword id="KW-0479">Metal-binding</keyword>
<keyword id="KW-0540">Nuclease</keyword>
<keyword id="KW-1185">Reference proteome</keyword>
<keyword id="KW-0690">Ribosome biogenesis</keyword>
<keyword id="KW-0698">rRNA processing</keyword>
<keyword id="KW-0862">Zinc</keyword>
<protein>
    <recommendedName>
        <fullName evidence="1">Endoribonuclease YbeY</fullName>
        <ecNumber evidence="1">3.1.-.-</ecNumber>
    </recommendedName>
</protein>
<gene>
    <name evidence="1" type="primary">ybeY</name>
    <name type="ordered locus">SPy_0473</name>
    <name type="ordered locus">M5005_Spy0388</name>
</gene>
<accession>P67140</accession>
<accession>Q490G2</accession>
<accession>Q8K8D9</accession>
<accession>Q9A143</accession>
<name>YBEY_STRP1</name>
<reference key="1">
    <citation type="journal article" date="2001" name="Proc. Natl. Acad. Sci. U.S.A.">
        <title>Complete genome sequence of an M1 strain of Streptococcus pyogenes.</title>
        <authorList>
            <person name="Ferretti J.J."/>
            <person name="McShan W.M."/>
            <person name="Ajdic D.J."/>
            <person name="Savic D.J."/>
            <person name="Savic G."/>
            <person name="Lyon K."/>
            <person name="Primeaux C."/>
            <person name="Sezate S."/>
            <person name="Suvorov A.N."/>
            <person name="Kenton S."/>
            <person name="Lai H.S."/>
            <person name="Lin S.P."/>
            <person name="Qian Y."/>
            <person name="Jia H.G."/>
            <person name="Najar F.Z."/>
            <person name="Ren Q."/>
            <person name="Zhu H."/>
            <person name="Song L."/>
            <person name="White J."/>
            <person name="Yuan X."/>
            <person name="Clifton S.W."/>
            <person name="Roe B.A."/>
            <person name="McLaughlin R.E."/>
        </authorList>
    </citation>
    <scope>NUCLEOTIDE SEQUENCE [LARGE SCALE GENOMIC DNA]</scope>
    <source>
        <strain>ATCC 700294 / SF370 / Serotype M1</strain>
    </source>
</reference>
<reference key="2">
    <citation type="journal article" date="2005" name="J. Infect. Dis.">
        <title>Evolutionary origin and emergence of a highly successful clone of serotype M1 group A Streptococcus involved multiple horizontal gene transfer events.</title>
        <authorList>
            <person name="Sumby P."/>
            <person name="Porcella S.F."/>
            <person name="Madrigal A.G."/>
            <person name="Barbian K.D."/>
            <person name="Virtaneva K."/>
            <person name="Ricklefs S.M."/>
            <person name="Sturdevant D.E."/>
            <person name="Graham M.R."/>
            <person name="Vuopio-Varkila J."/>
            <person name="Hoe N.P."/>
            <person name="Musser J.M."/>
        </authorList>
    </citation>
    <scope>NUCLEOTIDE SEQUENCE [LARGE SCALE GENOMIC DNA]</scope>
    <source>
        <strain>ATCC BAA-947 / MGAS5005 / Serotype M1</strain>
    </source>
</reference>
<comment type="function">
    <text evidence="1">Single strand-specific metallo-endoribonuclease involved in late-stage 70S ribosome quality control and in maturation of the 3' terminus of the 16S rRNA.</text>
</comment>
<comment type="cofactor">
    <cofactor evidence="1">
        <name>Zn(2+)</name>
        <dbReference type="ChEBI" id="CHEBI:29105"/>
    </cofactor>
    <text evidence="1">Binds 1 zinc ion.</text>
</comment>
<comment type="subcellular location">
    <subcellularLocation>
        <location evidence="1">Cytoplasm</location>
    </subcellularLocation>
</comment>
<comment type="similarity">
    <text evidence="1">Belongs to the endoribonuclease YbeY family.</text>
</comment>
<comment type="sequence caution" evidence="2">
    <conflict type="erroneous initiation">
        <sequence resource="EMBL-CDS" id="AAZ51006"/>
    </conflict>
</comment>
<feature type="chain" id="PRO_0000102542" description="Endoribonuclease YbeY">
    <location>
        <begin position="1"/>
        <end position="165"/>
    </location>
</feature>
<feature type="binding site" evidence="1">
    <location>
        <position position="130"/>
    </location>
    <ligand>
        <name>Zn(2+)</name>
        <dbReference type="ChEBI" id="CHEBI:29105"/>
        <note>catalytic</note>
    </ligand>
</feature>
<feature type="binding site" evidence="1">
    <location>
        <position position="134"/>
    </location>
    <ligand>
        <name>Zn(2+)</name>
        <dbReference type="ChEBI" id="CHEBI:29105"/>
        <note>catalytic</note>
    </ligand>
</feature>
<feature type="binding site" evidence="1">
    <location>
        <position position="140"/>
    </location>
    <ligand>
        <name>Zn(2+)</name>
        <dbReference type="ChEBI" id="CHEBI:29105"/>
        <note>catalytic</note>
    </ligand>
</feature>
<proteinExistence type="inferred from homology"/>
<organism>
    <name type="scientific">Streptococcus pyogenes serotype M1</name>
    <dbReference type="NCBI Taxonomy" id="301447"/>
    <lineage>
        <taxon>Bacteria</taxon>
        <taxon>Bacillati</taxon>
        <taxon>Bacillota</taxon>
        <taxon>Bacilli</taxon>
        <taxon>Lactobacillales</taxon>
        <taxon>Streptococcaceae</taxon>
        <taxon>Streptococcus</taxon>
    </lineage>
</organism>
<dbReference type="EC" id="3.1.-.-" evidence="1"/>
<dbReference type="EMBL" id="AE004092">
    <property type="protein sequence ID" value="AAK33485.1"/>
    <property type="molecule type" value="Genomic_DNA"/>
</dbReference>
<dbReference type="EMBL" id="CP000017">
    <property type="protein sequence ID" value="AAZ51006.1"/>
    <property type="status" value="ALT_INIT"/>
    <property type="molecule type" value="Genomic_DNA"/>
</dbReference>
<dbReference type="RefSeq" id="NP_268764.1">
    <property type="nucleotide sequence ID" value="NC_002737.2"/>
</dbReference>
<dbReference type="SMR" id="P67140"/>
<dbReference type="PaxDb" id="1314-HKU360_00417"/>
<dbReference type="KEGG" id="spy:SPy_0473"/>
<dbReference type="KEGG" id="spz:M5005_Spy0388"/>
<dbReference type="PATRIC" id="fig|160490.10.peg.399"/>
<dbReference type="HOGENOM" id="CLU_106710_3_0_9"/>
<dbReference type="OMA" id="RMRIHPL"/>
<dbReference type="Proteomes" id="UP000000750">
    <property type="component" value="Chromosome"/>
</dbReference>
<dbReference type="GO" id="GO:0005737">
    <property type="term" value="C:cytoplasm"/>
    <property type="evidence" value="ECO:0007669"/>
    <property type="project" value="UniProtKB-SubCell"/>
</dbReference>
<dbReference type="GO" id="GO:0004222">
    <property type="term" value="F:metalloendopeptidase activity"/>
    <property type="evidence" value="ECO:0007669"/>
    <property type="project" value="InterPro"/>
</dbReference>
<dbReference type="GO" id="GO:0004521">
    <property type="term" value="F:RNA endonuclease activity"/>
    <property type="evidence" value="ECO:0007669"/>
    <property type="project" value="UniProtKB-UniRule"/>
</dbReference>
<dbReference type="GO" id="GO:0008270">
    <property type="term" value="F:zinc ion binding"/>
    <property type="evidence" value="ECO:0007669"/>
    <property type="project" value="UniProtKB-UniRule"/>
</dbReference>
<dbReference type="GO" id="GO:0006364">
    <property type="term" value="P:rRNA processing"/>
    <property type="evidence" value="ECO:0007669"/>
    <property type="project" value="UniProtKB-UniRule"/>
</dbReference>
<dbReference type="Gene3D" id="3.40.390.30">
    <property type="entry name" value="Metalloproteases ('zincins'), catalytic domain"/>
    <property type="match status" value="1"/>
</dbReference>
<dbReference type="HAMAP" id="MF_00009">
    <property type="entry name" value="Endoribonucl_YbeY"/>
    <property type="match status" value="1"/>
</dbReference>
<dbReference type="InterPro" id="IPR023091">
    <property type="entry name" value="MetalPrtase_cat_dom_sf_prd"/>
</dbReference>
<dbReference type="InterPro" id="IPR002036">
    <property type="entry name" value="YbeY"/>
</dbReference>
<dbReference type="InterPro" id="IPR020549">
    <property type="entry name" value="YbeY_CS"/>
</dbReference>
<dbReference type="NCBIfam" id="TIGR00043">
    <property type="entry name" value="rRNA maturation RNase YbeY"/>
    <property type="match status" value="1"/>
</dbReference>
<dbReference type="PANTHER" id="PTHR46986">
    <property type="entry name" value="ENDORIBONUCLEASE YBEY, CHLOROPLASTIC"/>
    <property type="match status" value="1"/>
</dbReference>
<dbReference type="PANTHER" id="PTHR46986:SF1">
    <property type="entry name" value="ENDORIBONUCLEASE YBEY, CHLOROPLASTIC"/>
    <property type="match status" value="1"/>
</dbReference>
<dbReference type="Pfam" id="PF02130">
    <property type="entry name" value="YbeY"/>
    <property type="match status" value="1"/>
</dbReference>
<dbReference type="SUPFAM" id="SSF55486">
    <property type="entry name" value="Metalloproteases ('zincins'), catalytic domain"/>
    <property type="match status" value="1"/>
</dbReference>
<dbReference type="PROSITE" id="PS01306">
    <property type="entry name" value="UPF0054"/>
    <property type="match status" value="1"/>
</dbReference>
<evidence type="ECO:0000255" key="1">
    <source>
        <dbReference type="HAMAP-Rule" id="MF_00009"/>
    </source>
</evidence>
<evidence type="ECO:0000305" key="2"/>